<organism>
    <name type="scientific">Buchnera aphidicola subsp. Baizongia pistaciae (strain Bp)</name>
    <dbReference type="NCBI Taxonomy" id="224915"/>
    <lineage>
        <taxon>Bacteria</taxon>
        <taxon>Pseudomonadati</taxon>
        <taxon>Pseudomonadota</taxon>
        <taxon>Gammaproteobacteria</taxon>
        <taxon>Enterobacterales</taxon>
        <taxon>Erwiniaceae</taxon>
        <taxon>Buchnera</taxon>
    </lineage>
</organism>
<comment type="function">
    <text evidence="1">Catalyzes the attachment of valine to tRNA(Val). As ValRS can inadvertently accommodate and process structurally similar amino acids such as threonine, to avoid such errors, it has a 'posttransfer' editing activity that hydrolyzes mischarged Thr-tRNA(Val) in a tRNA-dependent manner.</text>
</comment>
<comment type="catalytic activity">
    <reaction evidence="1">
        <text>tRNA(Val) + L-valine + ATP = L-valyl-tRNA(Val) + AMP + diphosphate</text>
        <dbReference type="Rhea" id="RHEA:10704"/>
        <dbReference type="Rhea" id="RHEA-COMP:9672"/>
        <dbReference type="Rhea" id="RHEA-COMP:9708"/>
        <dbReference type="ChEBI" id="CHEBI:30616"/>
        <dbReference type="ChEBI" id="CHEBI:33019"/>
        <dbReference type="ChEBI" id="CHEBI:57762"/>
        <dbReference type="ChEBI" id="CHEBI:78442"/>
        <dbReference type="ChEBI" id="CHEBI:78537"/>
        <dbReference type="ChEBI" id="CHEBI:456215"/>
        <dbReference type="EC" id="6.1.1.9"/>
    </reaction>
</comment>
<comment type="subunit">
    <text evidence="1">Monomer.</text>
</comment>
<comment type="subcellular location">
    <subcellularLocation>
        <location evidence="1">Cytoplasm</location>
    </subcellularLocation>
</comment>
<comment type="domain">
    <text evidence="1">ValRS has two distinct active sites: one for aminoacylation and one for editing. The misactivated threonine is translocated from the active site to the editing site.</text>
</comment>
<comment type="domain">
    <text evidence="1">The C-terminal coiled-coil domain is crucial for aminoacylation activity.</text>
</comment>
<comment type="similarity">
    <text evidence="1">Belongs to the class-I aminoacyl-tRNA synthetase family. ValS type 1 subfamily.</text>
</comment>
<proteinExistence type="inferred from homology"/>
<protein>
    <recommendedName>
        <fullName evidence="1">Valine--tRNA ligase</fullName>
        <ecNumber evidence="1">6.1.1.9</ecNumber>
    </recommendedName>
    <alternativeName>
        <fullName evidence="1">Valyl-tRNA synthetase</fullName>
        <shortName evidence="1">ValRS</shortName>
    </alternativeName>
</protein>
<feature type="chain" id="PRO_0000106218" description="Valine--tRNA ligase">
    <location>
        <begin position="1"/>
        <end position="956"/>
    </location>
</feature>
<feature type="coiled-coil region" evidence="1">
    <location>
        <begin position="889"/>
        <end position="920"/>
    </location>
</feature>
<feature type="short sequence motif" description="'HIGH' region">
    <location>
        <begin position="43"/>
        <end position="53"/>
    </location>
</feature>
<feature type="short sequence motif" description="'KMSKS' region">
    <location>
        <begin position="556"/>
        <end position="560"/>
    </location>
</feature>
<feature type="binding site" evidence="1">
    <location>
        <position position="559"/>
    </location>
    <ligand>
        <name>ATP</name>
        <dbReference type="ChEBI" id="CHEBI:30616"/>
    </ligand>
</feature>
<evidence type="ECO:0000255" key="1">
    <source>
        <dbReference type="HAMAP-Rule" id="MF_02004"/>
    </source>
</evidence>
<keyword id="KW-0030">Aminoacyl-tRNA synthetase</keyword>
<keyword id="KW-0067">ATP-binding</keyword>
<keyword id="KW-0175">Coiled coil</keyword>
<keyword id="KW-0963">Cytoplasm</keyword>
<keyword id="KW-0436">Ligase</keyword>
<keyword id="KW-0547">Nucleotide-binding</keyword>
<keyword id="KW-0648">Protein biosynthesis</keyword>
<keyword id="KW-1185">Reference proteome</keyword>
<reference key="1">
    <citation type="journal article" date="2003" name="Proc. Natl. Acad. Sci. U.S.A.">
        <title>Reductive genome evolution in Buchnera aphidicola.</title>
        <authorList>
            <person name="van Ham R.C.H.J."/>
            <person name="Kamerbeek J."/>
            <person name="Palacios C."/>
            <person name="Rausell C."/>
            <person name="Abascal F."/>
            <person name="Bastolla U."/>
            <person name="Fernandez J.M."/>
            <person name="Jimenez L."/>
            <person name="Postigo M."/>
            <person name="Silva F.J."/>
            <person name="Tamames J."/>
            <person name="Viguera E."/>
            <person name="Latorre A."/>
            <person name="Valencia A."/>
            <person name="Moran F."/>
            <person name="Moya A."/>
        </authorList>
    </citation>
    <scope>NUCLEOTIDE SEQUENCE [LARGE SCALE GENOMIC DNA]</scope>
    <source>
        <strain>Bp</strain>
    </source>
</reference>
<gene>
    <name evidence="1" type="primary">valS</name>
    <name type="ordered locus">bbp_331</name>
</gene>
<accession>Q89AG3</accession>
<dbReference type="EC" id="6.1.1.9" evidence="1"/>
<dbReference type="EMBL" id="AE016826">
    <property type="protein sequence ID" value="AAO27052.1"/>
    <property type="molecule type" value="Genomic_DNA"/>
</dbReference>
<dbReference type="SMR" id="Q89AG3"/>
<dbReference type="STRING" id="224915.bbp_331"/>
<dbReference type="KEGG" id="bab:bbp_331"/>
<dbReference type="eggNOG" id="COG0525">
    <property type="taxonomic scope" value="Bacteria"/>
</dbReference>
<dbReference type="HOGENOM" id="CLU_001493_0_2_6"/>
<dbReference type="OrthoDB" id="9810365at2"/>
<dbReference type="Proteomes" id="UP000000601">
    <property type="component" value="Chromosome"/>
</dbReference>
<dbReference type="GO" id="GO:0005829">
    <property type="term" value="C:cytosol"/>
    <property type="evidence" value="ECO:0007669"/>
    <property type="project" value="TreeGrafter"/>
</dbReference>
<dbReference type="GO" id="GO:0002161">
    <property type="term" value="F:aminoacyl-tRNA deacylase activity"/>
    <property type="evidence" value="ECO:0007669"/>
    <property type="project" value="InterPro"/>
</dbReference>
<dbReference type="GO" id="GO:0005524">
    <property type="term" value="F:ATP binding"/>
    <property type="evidence" value="ECO:0007669"/>
    <property type="project" value="UniProtKB-UniRule"/>
</dbReference>
<dbReference type="GO" id="GO:0004832">
    <property type="term" value="F:valine-tRNA ligase activity"/>
    <property type="evidence" value="ECO:0007669"/>
    <property type="project" value="UniProtKB-UniRule"/>
</dbReference>
<dbReference type="GO" id="GO:0006438">
    <property type="term" value="P:valyl-tRNA aminoacylation"/>
    <property type="evidence" value="ECO:0007669"/>
    <property type="project" value="UniProtKB-UniRule"/>
</dbReference>
<dbReference type="CDD" id="cd07962">
    <property type="entry name" value="Anticodon_Ia_Val"/>
    <property type="match status" value="1"/>
</dbReference>
<dbReference type="CDD" id="cd00817">
    <property type="entry name" value="ValRS_core"/>
    <property type="match status" value="1"/>
</dbReference>
<dbReference type="FunFam" id="3.40.50.620:FF:000032">
    <property type="entry name" value="Valine--tRNA ligase"/>
    <property type="match status" value="1"/>
</dbReference>
<dbReference type="FunFam" id="3.40.50.620:FF:000073">
    <property type="entry name" value="Valine--tRNA ligase"/>
    <property type="match status" value="1"/>
</dbReference>
<dbReference type="Gene3D" id="3.40.50.620">
    <property type="entry name" value="HUPs"/>
    <property type="match status" value="2"/>
</dbReference>
<dbReference type="Gene3D" id="1.10.730.10">
    <property type="entry name" value="Isoleucyl-tRNA Synthetase, Domain 1"/>
    <property type="match status" value="1"/>
</dbReference>
<dbReference type="Gene3D" id="1.10.287.380">
    <property type="entry name" value="Valyl-tRNA synthetase, C-terminal domain"/>
    <property type="match status" value="1"/>
</dbReference>
<dbReference type="Gene3D" id="3.90.740.10">
    <property type="entry name" value="Valyl/Leucyl/Isoleucyl-tRNA synthetase, editing domain"/>
    <property type="match status" value="1"/>
</dbReference>
<dbReference type="HAMAP" id="MF_02004">
    <property type="entry name" value="Val_tRNA_synth_type1"/>
    <property type="match status" value="1"/>
</dbReference>
<dbReference type="InterPro" id="IPR001412">
    <property type="entry name" value="aa-tRNA-synth_I_CS"/>
</dbReference>
<dbReference type="InterPro" id="IPR002300">
    <property type="entry name" value="aa-tRNA-synth_Ia"/>
</dbReference>
<dbReference type="InterPro" id="IPR033705">
    <property type="entry name" value="Anticodon_Ia_Val"/>
</dbReference>
<dbReference type="InterPro" id="IPR013155">
    <property type="entry name" value="M/V/L/I-tRNA-synth_anticd-bd"/>
</dbReference>
<dbReference type="InterPro" id="IPR014729">
    <property type="entry name" value="Rossmann-like_a/b/a_fold"/>
</dbReference>
<dbReference type="InterPro" id="IPR010978">
    <property type="entry name" value="tRNA-bd_arm"/>
</dbReference>
<dbReference type="InterPro" id="IPR009080">
    <property type="entry name" value="tRNAsynth_Ia_anticodon-bd"/>
</dbReference>
<dbReference type="InterPro" id="IPR037118">
    <property type="entry name" value="Val-tRNA_synth_C_sf"/>
</dbReference>
<dbReference type="InterPro" id="IPR019499">
    <property type="entry name" value="Val-tRNA_synth_tRNA-bd"/>
</dbReference>
<dbReference type="InterPro" id="IPR009008">
    <property type="entry name" value="Val/Leu/Ile-tRNA-synth_edit"/>
</dbReference>
<dbReference type="InterPro" id="IPR002303">
    <property type="entry name" value="Valyl-tRNA_ligase"/>
</dbReference>
<dbReference type="NCBIfam" id="NF004349">
    <property type="entry name" value="PRK05729.1"/>
    <property type="match status" value="1"/>
</dbReference>
<dbReference type="NCBIfam" id="TIGR00422">
    <property type="entry name" value="valS"/>
    <property type="match status" value="1"/>
</dbReference>
<dbReference type="PANTHER" id="PTHR11946:SF93">
    <property type="entry name" value="VALINE--TRNA LIGASE, CHLOROPLASTIC_MITOCHONDRIAL 2"/>
    <property type="match status" value="1"/>
</dbReference>
<dbReference type="PANTHER" id="PTHR11946">
    <property type="entry name" value="VALYL-TRNA SYNTHETASES"/>
    <property type="match status" value="1"/>
</dbReference>
<dbReference type="Pfam" id="PF08264">
    <property type="entry name" value="Anticodon_1"/>
    <property type="match status" value="1"/>
</dbReference>
<dbReference type="Pfam" id="PF00133">
    <property type="entry name" value="tRNA-synt_1"/>
    <property type="match status" value="1"/>
</dbReference>
<dbReference type="Pfam" id="PF10458">
    <property type="entry name" value="Val_tRNA-synt_C"/>
    <property type="match status" value="1"/>
</dbReference>
<dbReference type="PRINTS" id="PR00986">
    <property type="entry name" value="TRNASYNTHVAL"/>
</dbReference>
<dbReference type="SUPFAM" id="SSF47323">
    <property type="entry name" value="Anticodon-binding domain of a subclass of class I aminoacyl-tRNA synthetases"/>
    <property type="match status" value="1"/>
</dbReference>
<dbReference type="SUPFAM" id="SSF52374">
    <property type="entry name" value="Nucleotidylyl transferase"/>
    <property type="match status" value="1"/>
</dbReference>
<dbReference type="SUPFAM" id="SSF46589">
    <property type="entry name" value="tRNA-binding arm"/>
    <property type="match status" value="1"/>
</dbReference>
<dbReference type="SUPFAM" id="SSF50677">
    <property type="entry name" value="ValRS/IleRS/LeuRS editing domain"/>
    <property type="match status" value="1"/>
</dbReference>
<dbReference type="PROSITE" id="PS00178">
    <property type="entry name" value="AA_TRNA_LIGASE_I"/>
    <property type="match status" value="1"/>
</dbReference>
<sequence length="956" mass="112418">MIKKYFDPLRMEKSLYEFWEKNGYFKPQNNKGKPNFCIVMPPPNITGNLHIGHAFQQTIMDILIRYNRMIGKNTFWQVGTDHAGIATQIVVEKKILKEENKTVQQLGKKEFLERIWKWKNTSKNVITSQMRRLGISVDWTHEKFTLDPQISFAVRKVFMTLYDECLIYKRKKLVNWDPVLKTVISDLEVKNRNVIGNMWYIKYYLVKNHSIKISQEYYLVIATTRPETLFGDTAIAVHPNDSRYKKYIGCYALVPIINRIIPIISDEFVDVNKGTGCVKITPAHDFNDYEIAMRHNLSIINVFTRNGKITDVIEEYDISGEKSCIYKQNVPLRFHHLDRFIARKIIVKELIALKLLIKIQKHNLAIPYGERSGSVIEPLLTDQWYLRVEPLAKIAVEAVKSGKIIFIPKKYEKIYYSWMNNIKDWCISRQLLWGHRMPIWYDKKNNIYVGLDEKHIREKYHISDDIFLIQETDVLDTWFSSSLWMFSSLGWPNNKDLFKNFYSTDVVVSGFDIIFFWIARMIMLSMHLIKDHNGNGRVPFKKVYITGLICDEHGKKMSKSKGNVVDPLDMIDGISLDALIQKRIKSTVFSTHSKKIITQIQSLYPNGINSSGVDALRFTCAALSTPTRYIKWNINRLYGYRNFCNKLWNASRFILMNLTHEVEPVKLILIKPMSLSDRWIVAEFHNLVKRYRTALDNYRFDIAANVLYEFVWNKFCDFYIELVKSFINSCSMLELKSTRCTLVYILDSVLRLAHPIIPFITEEIWQKLQVFVKKNDKNTIMLQSFPKYDVKLVNKTILEDMDWIKNIFIIIRSFRMDLKISHTTLISISFKNVSSKIHKLIEEHKDYIKKIAYLDNVSIILSNVDSMLFFKSYIVLGAELLIPYSKIFPKEKELKNLNKEISKIQLAINKLQQRLSNEEFIGKAPIHVVKKYKNQLQIYIEHKTQLCHKKLTMLRD</sequence>
<name>SYV_BUCBP</name>